<organism>
    <name type="scientific">Burkholderia pseudomallei (strain K96243)</name>
    <dbReference type="NCBI Taxonomy" id="272560"/>
    <lineage>
        <taxon>Bacteria</taxon>
        <taxon>Pseudomonadati</taxon>
        <taxon>Pseudomonadota</taxon>
        <taxon>Betaproteobacteria</taxon>
        <taxon>Burkholderiales</taxon>
        <taxon>Burkholderiaceae</taxon>
        <taxon>Burkholderia</taxon>
        <taxon>pseudomallei group</taxon>
    </lineage>
</organism>
<dbReference type="EMBL" id="BX571965">
    <property type="protein sequence ID" value="CAH37219.1"/>
    <property type="molecule type" value="Genomic_DNA"/>
</dbReference>
<dbReference type="RefSeq" id="WP_004199272.1">
    <property type="nucleotide sequence ID" value="NZ_CP009538.1"/>
</dbReference>
<dbReference type="RefSeq" id="YP_109802.1">
    <property type="nucleotide sequence ID" value="NC_006350.1"/>
</dbReference>
<dbReference type="SMR" id="Q63Q16"/>
<dbReference type="STRING" id="272560.BPSL3208"/>
<dbReference type="GeneID" id="98107155"/>
<dbReference type="KEGG" id="bps:BPSL3208"/>
<dbReference type="PATRIC" id="fig|272560.51.peg.2030"/>
<dbReference type="eggNOG" id="COG0091">
    <property type="taxonomic scope" value="Bacteria"/>
</dbReference>
<dbReference type="PRO" id="PR:Q63Q16"/>
<dbReference type="Proteomes" id="UP000000605">
    <property type="component" value="Chromosome 1"/>
</dbReference>
<dbReference type="GO" id="GO:0022625">
    <property type="term" value="C:cytosolic large ribosomal subunit"/>
    <property type="evidence" value="ECO:0007669"/>
    <property type="project" value="TreeGrafter"/>
</dbReference>
<dbReference type="GO" id="GO:0019843">
    <property type="term" value="F:rRNA binding"/>
    <property type="evidence" value="ECO:0007669"/>
    <property type="project" value="UniProtKB-UniRule"/>
</dbReference>
<dbReference type="GO" id="GO:0003735">
    <property type="term" value="F:structural constituent of ribosome"/>
    <property type="evidence" value="ECO:0007669"/>
    <property type="project" value="InterPro"/>
</dbReference>
<dbReference type="GO" id="GO:0006412">
    <property type="term" value="P:translation"/>
    <property type="evidence" value="ECO:0007669"/>
    <property type="project" value="UniProtKB-UniRule"/>
</dbReference>
<dbReference type="CDD" id="cd00336">
    <property type="entry name" value="Ribosomal_L22"/>
    <property type="match status" value="1"/>
</dbReference>
<dbReference type="FunFam" id="3.90.470.10:FF:000001">
    <property type="entry name" value="50S ribosomal protein L22"/>
    <property type="match status" value="1"/>
</dbReference>
<dbReference type="Gene3D" id="3.90.470.10">
    <property type="entry name" value="Ribosomal protein L22/L17"/>
    <property type="match status" value="1"/>
</dbReference>
<dbReference type="HAMAP" id="MF_01331_B">
    <property type="entry name" value="Ribosomal_uL22_B"/>
    <property type="match status" value="1"/>
</dbReference>
<dbReference type="InterPro" id="IPR001063">
    <property type="entry name" value="Ribosomal_uL22"/>
</dbReference>
<dbReference type="InterPro" id="IPR005727">
    <property type="entry name" value="Ribosomal_uL22_bac/chlpt-type"/>
</dbReference>
<dbReference type="InterPro" id="IPR047867">
    <property type="entry name" value="Ribosomal_uL22_bac/org-type"/>
</dbReference>
<dbReference type="InterPro" id="IPR018260">
    <property type="entry name" value="Ribosomal_uL22_CS"/>
</dbReference>
<dbReference type="InterPro" id="IPR036394">
    <property type="entry name" value="Ribosomal_uL22_sf"/>
</dbReference>
<dbReference type="NCBIfam" id="TIGR01044">
    <property type="entry name" value="rplV_bact"/>
    <property type="match status" value="1"/>
</dbReference>
<dbReference type="PANTHER" id="PTHR13501">
    <property type="entry name" value="CHLOROPLAST 50S RIBOSOMAL PROTEIN L22-RELATED"/>
    <property type="match status" value="1"/>
</dbReference>
<dbReference type="PANTHER" id="PTHR13501:SF8">
    <property type="entry name" value="LARGE RIBOSOMAL SUBUNIT PROTEIN UL22M"/>
    <property type="match status" value="1"/>
</dbReference>
<dbReference type="Pfam" id="PF00237">
    <property type="entry name" value="Ribosomal_L22"/>
    <property type="match status" value="1"/>
</dbReference>
<dbReference type="SUPFAM" id="SSF54843">
    <property type="entry name" value="Ribosomal protein L22"/>
    <property type="match status" value="1"/>
</dbReference>
<dbReference type="PROSITE" id="PS00464">
    <property type="entry name" value="RIBOSOMAL_L22"/>
    <property type="match status" value="1"/>
</dbReference>
<feature type="chain" id="PRO_0000243131" description="Large ribosomal subunit protein uL22">
    <location>
        <begin position="1"/>
        <end position="109"/>
    </location>
</feature>
<sequence>MEVKAIHRGARISAQKTRLVADQIRGLPVDKALNVLTFSPKKAAGIVKKVVLSAIANAEHNEGADIDELKIKSIYVDKAASLKRFTARAKGRGNRIEKQSCHITVTVGN</sequence>
<accession>Q63Q16</accession>
<keyword id="KW-1185">Reference proteome</keyword>
<keyword id="KW-0687">Ribonucleoprotein</keyword>
<keyword id="KW-0689">Ribosomal protein</keyword>
<keyword id="KW-0694">RNA-binding</keyword>
<keyword id="KW-0699">rRNA-binding</keyword>
<protein>
    <recommendedName>
        <fullName evidence="1">Large ribosomal subunit protein uL22</fullName>
    </recommendedName>
    <alternativeName>
        <fullName evidence="2">50S ribosomal protein L22</fullName>
    </alternativeName>
</protein>
<evidence type="ECO:0000255" key="1">
    <source>
        <dbReference type="HAMAP-Rule" id="MF_01331"/>
    </source>
</evidence>
<evidence type="ECO:0000305" key="2"/>
<name>RL22_BURPS</name>
<proteinExistence type="inferred from homology"/>
<comment type="function">
    <text evidence="1">This protein binds specifically to 23S rRNA; its binding is stimulated by other ribosomal proteins, e.g. L4, L17, and L20. It is important during the early stages of 50S assembly. It makes multiple contacts with different domains of the 23S rRNA in the assembled 50S subunit and ribosome (By similarity).</text>
</comment>
<comment type="function">
    <text evidence="1">The globular domain of the protein is located near the polypeptide exit tunnel on the outside of the subunit, while an extended beta-hairpin is found that lines the wall of the exit tunnel in the center of the 70S ribosome.</text>
</comment>
<comment type="subunit">
    <text evidence="1">Part of the 50S ribosomal subunit.</text>
</comment>
<comment type="similarity">
    <text evidence="1">Belongs to the universal ribosomal protein uL22 family.</text>
</comment>
<reference key="1">
    <citation type="journal article" date="2004" name="Proc. Natl. Acad. Sci. U.S.A.">
        <title>Genomic plasticity of the causative agent of melioidosis, Burkholderia pseudomallei.</title>
        <authorList>
            <person name="Holden M.T.G."/>
            <person name="Titball R.W."/>
            <person name="Peacock S.J."/>
            <person name="Cerdeno-Tarraga A.-M."/>
            <person name="Atkins T."/>
            <person name="Crossman L.C."/>
            <person name="Pitt T."/>
            <person name="Churcher C."/>
            <person name="Mungall K.L."/>
            <person name="Bentley S.D."/>
            <person name="Sebaihia M."/>
            <person name="Thomson N.R."/>
            <person name="Bason N."/>
            <person name="Beacham I.R."/>
            <person name="Brooks K."/>
            <person name="Brown K.A."/>
            <person name="Brown N.F."/>
            <person name="Challis G.L."/>
            <person name="Cherevach I."/>
            <person name="Chillingworth T."/>
            <person name="Cronin A."/>
            <person name="Crossett B."/>
            <person name="Davis P."/>
            <person name="DeShazer D."/>
            <person name="Feltwell T."/>
            <person name="Fraser A."/>
            <person name="Hance Z."/>
            <person name="Hauser H."/>
            <person name="Holroyd S."/>
            <person name="Jagels K."/>
            <person name="Keith K.E."/>
            <person name="Maddison M."/>
            <person name="Moule S."/>
            <person name="Price C."/>
            <person name="Quail M.A."/>
            <person name="Rabbinowitsch E."/>
            <person name="Rutherford K."/>
            <person name="Sanders M."/>
            <person name="Simmonds M."/>
            <person name="Songsivilai S."/>
            <person name="Stevens K."/>
            <person name="Tumapa S."/>
            <person name="Vesaratchavest M."/>
            <person name="Whitehead S."/>
            <person name="Yeats C."/>
            <person name="Barrell B.G."/>
            <person name="Oyston P.C.F."/>
            <person name="Parkhill J."/>
        </authorList>
    </citation>
    <scope>NUCLEOTIDE SEQUENCE [LARGE SCALE GENOMIC DNA]</scope>
    <source>
        <strain>K96243</strain>
    </source>
</reference>
<gene>
    <name evidence="1" type="primary">rplV</name>
    <name type="ordered locus">BPSL3208</name>
</gene>